<protein>
    <recommendedName>
        <fullName evidence="1">Small ribosomal subunit protein uS7</fullName>
    </recommendedName>
    <alternativeName>
        <fullName evidence="2">30S ribosomal protein S7</fullName>
    </alternativeName>
</protein>
<reference key="1">
    <citation type="journal article" date="2008" name="PLoS Genet.">
        <title>Complete genome sequence of the N2-fixing broad host range endophyte Klebsiella pneumoniae 342 and virulence predictions verified in mice.</title>
        <authorList>
            <person name="Fouts D.E."/>
            <person name="Tyler H.L."/>
            <person name="DeBoy R.T."/>
            <person name="Daugherty S."/>
            <person name="Ren Q."/>
            <person name="Badger J.H."/>
            <person name="Durkin A.S."/>
            <person name="Huot H."/>
            <person name="Shrivastava S."/>
            <person name="Kothari S."/>
            <person name="Dodson R.J."/>
            <person name="Mohamoud Y."/>
            <person name="Khouri H."/>
            <person name="Roesch L.F.W."/>
            <person name="Krogfelt K.A."/>
            <person name="Struve C."/>
            <person name="Triplett E.W."/>
            <person name="Methe B.A."/>
        </authorList>
    </citation>
    <scope>NUCLEOTIDE SEQUENCE [LARGE SCALE GENOMIC DNA]</scope>
    <source>
        <strain>342</strain>
    </source>
</reference>
<keyword id="KW-0687">Ribonucleoprotein</keyword>
<keyword id="KW-0689">Ribosomal protein</keyword>
<keyword id="KW-0694">RNA-binding</keyword>
<keyword id="KW-0699">rRNA-binding</keyword>
<keyword id="KW-0820">tRNA-binding</keyword>
<sequence>MPRRRVIGQRKILPDPKFGSELLAKFVNILMVDGKKSTAEAIVYSALETLAQRSGKNELEAFEVALDNVRPTVEVKSRRVGGSTYQVPVEVRPVRRNALAMRWIVEAARKRGDKSMALRLANELTDAADNKGTAVKKREDVHRMAEANKAFAHYRW</sequence>
<proteinExistence type="inferred from homology"/>
<dbReference type="EMBL" id="CP000964">
    <property type="protein sequence ID" value="ACI07746.1"/>
    <property type="molecule type" value="Genomic_DNA"/>
</dbReference>
<dbReference type="SMR" id="B5XN86"/>
<dbReference type="KEGG" id="kpe:KPK_0391"/>
<dbReference type="HOGENOM" id="CLU_072226_1_1_6"/>
<dbReference type="Proteomes" id="UP000001734">
    <property type="component" value="Chromosome"/>
</dbReference>
<dbReference type="GO" id="GO:0015935">
    <property type="term" value="C:small ribosomal subunit"/>
    <property type="evidence" value="ECO:0007669"/>
    <property type="project" value="InterPro"/>
</dbReference>
<dbReference type="GO" id="GO:0019843">
    <property type="term" value="F:rRNA binding"/>
    <property type="evidence" value="ECO:0007669"/>
    <property type="project" value="UniProtKB-UniRule"/>
</dbReference>
<dbReference type="GO" id="GO:0003735">
    <property type="term" value="F:structural constituent of ribosome"/>
    <property type="evidence" value="ECO:0007669"/>
    <property type="project" value="InterPro"/>
</dbReference>
<dbReference type="GO" id="GO:0000049">
    <property type="term" value="F:tRNA binding"/>
    <property type="evidence" value="ECO:0007669"/>
    <property type="project" value="UniProtKB-UniRule"/>
</dbReference>
<dbReference type="GO" id="GO:0006412">
    <property type="term" value="P:translation"/>
    <property type="evidence" value="ECO:0007669"/>
    <property type="project" value="UniProtKB-UniRule"/>
</dbReference>
<dbReference type="CDD" id="cd14869">
    <property type="entry name" value="uS7_Bacteria"/>
    <property type="match status" value="1"/>
</dbReference>
<dbReference type="FunFam" id="1.10.455.10:FF:000001">
    <property type="entry name" value="30S ribosomal protein S7"/>
    <property type="match status" value="1"/>
</dbReference>
<dbReference type="Gene3D" id="1.10.455.10">
    <property type="entry name" value="Ribosomal protein S7 domain"/>
    <property type="match status" value="1"/>
</dbReference>
<dbReference type="HAMAP" id="MF_00480_B">
    <property type="entry name" value="Ribosomal_uS7_B"/>
    <property type="match status" value="1"/>
</dbReference>
<dbReference type="InterPro" id="IPR000235">
    <property type="entry name" value="Ribosomal_uS7"/>
</dbReference>
<dbReference type="InterPro" id="IPR005717">
    <property type="entry name" value="Ribosomal_uS7_bac/org-type"/>
</dbReference>
<dbReference type="InterPro" id="IPR020606">
    <property type="entry name" value="Ribosomal_uS7_CS"/>
</dbReference>
<dbReference type="InterPro" id="IPR023798">
    <property type="entry name" value="Ribosomal_uS7_dom"/>
</dbReference>
<dbReference type="InterPro" id="IPR036823">
    <property type="entry name" value="Ribosomal_uS7_dom_sf"/>
</dbReference>
<dbReference type="NCBIfam" id="TIGR01029">
    <property type="entry name" value="rpsG_bact"/>
    <property type="match status" value="1"/>
</dbReference>
<dbReference type="PANTHER" id="PTHR11205">
    <property type="entry name" value="RIBOSOMAL PROTEIN S7"/>
    <property type="match status" value="1"/>
</dbReference>
<dbReference type="Pfam" id="PF00177">
    <property type="entry name" value="Ribosomal_S7"/>
    <property type="match status" value="1"/>
</dbReference>
<dbReference type="PIRSF" id="PIRSF002122">
    <property type="entry name" value="RPS7p_RPS7a_RPS5e_RPS7o"/>
    <property type="match status" value="1"/>
</dbReference>
<dbReference type="SUPFAM" id="SSF47973">
    <property type="entry name" value="Ribosomal protein S7"/>
    <property type="match status" value="1"/>
</dbReference>
<dbReference type="PROSITE" id="PS00052">
    <property type="entry name" value="RIBOSOMAL_S7"/>
    <property type="match status" value="1"/>
</dbReference>
<evidence type="ECO:0000255" key="1">
    <source>
        <dbReference type="HAMAP-Rule" id="MF_00480"/>
    </source>
</evidence>
<evidence type="ECO:0000305" key="2"/>
<accession>B5XN86</accession>
<gene>
    <name evidence="1" type="primary">rpsG</name>
    <name type="ordered locus">KPK_0391</name>
</gene>
<feature type="chain" id="PRO_1000125957" description="Small ribosomal subunit protein uS7">
    <location>
        <begin position="1"/>
        <end position="156"/>
    </location>
</feature>
<organism>
    <name type="scientific">Klebsiella pneumoniae (strain 342)</name>
    <dbReference type="NCBI Taxonomy" id="507522"/>
    <lineage>
        <taxon>Bacteria</taxon>
        <taxon>Pseudomonadati</taxon>
        <taxon>Pseudomonadota</taxon>
        <taxon>Gammaproteobacteria</taxon>
        <taxon>Enterobacterales</taxon>
        <taxon>Enterobacteriaceae</taxon>
        <taxon>Klebsiella/Raoultella group</taxon>
        <taxon>Klebsiella</taxon>
        <taxon>Klebsiella pneumoniae complex</taxon>
    </lineage>
</organism>
<comment type="function">
    <text evidence="1">One of the primary rRNA binding proteins, it binds directly to 16S rRNA where it nucleates assembly of the head domain of the 30S subunit. Is located at the subunit interface close to the decoding center, probably blocks exit of the E-site tRNA.</text>
</comment>
<comment type="subunit">
    <text evidence="1">Part of the 30S ribosomal subunit. Contacts proteins S9 and S11.</text>
</comment>
<comment type="similarity">
    <text evidence="1">Belongs to the universal ribosomal protein uS7 family.</text>
</comment>
<name>RS7_KLEP3</name>